<protein>
    <recommendedName>
        <fullName evidence="1">Probable glycine dehydrogenase (decarboxylating) subunit 1</fullName>
        <ecNumber evidence="1">1.4.4.2</ecNumber>
    </recommendedName>
    <alternativeName>
        <fullName evidence="1">Glycine cleavage system P-protein subunit 1</fullName>
    </alternativeName>
    <alternativeName>
        <fullName evidence="1">Glycine decarboxylase subunit 1</fullName>
    </alternativeName>
    <alternativeName>
        <fullName evidence="1">Glycine dehydrogenase (aminomethyl-transferring) subunit 1</fullName>
    </alternativeName>
</protein>
<accession>A7HDC9</accession>
<sequence>MRYHPHTPEDVRAMLDVIGAESLDDLFRSIPERLRLARPLDLPPAADEITLFAELRALAARDDTAHPPFVGAGCYPHHVPPAVDQLLLRGEFFTAYTPYQPEVSQGTLQALFEWQTFVCLLTGMDVSNASMYDGATAMAEAALMATRVTGRSKIVVSAAVHPEYRKVLATYLRSTGDEIVTVPFGADGRTDLRALEAAVDGGTAAVIVGYPSFLGVVDALPQAAAIAKKAGALTVAVTAEAVALGLLQAPGALGADVAVGTFQSFGNPMSFGGPAPGFFAIREQFVRQMPGRVCGATVDKHGRRGFVLTLSTREQHIRREKATSNICTNSGLAALAATIHLALLGKQGLAELARLNFARARMLKDALGRAGIAPLFSAPPFNELAFDVGDAEAVVARLAKRGIAAGAPLARWYPELPRAKGALLSVATELHTPELIELFAQSVKG</sequence>
<name>GCSPA_ANADF</name>
<feature type="chain" id="PRO_1000045636" description="Probable glycine dehydrogenase (decarboxylating) subunit 1">
    <location>
        <begin position="1"/>
        <end position="445"/>
    </location>
</feature>
<gene>
    <name evidence="1" type="primary">gcvPA</name>
    <name type="ordered locus">Anae109_2524</name>
</gene>
<dbReference type="EC" id="1.4.4.2" evidence="1"/>
<dbReference type="EMBL" id="CP000769">
    <property type="protein sequence ID" value="ABS26725.1"/>
    <property type="molecule type" value="Genomic_DNA"/>
</dbReference>
<dbReference type="RefSeq" id="WP_012097318.1">
    <property type="nucleotide sequence ID" value="NC_009675.1"/>
</dbReference>
<dbReference type="SMR" id="A7HDC9"/>
<dbReference type="STRING" id="404589.Anae109_2524"/>
<dbReference type="KEGG" id="afw:Anae109_2524"/>
<dbReference type="eggNOG" id="COG0403">
    <property type="taxonomic scope" value="Bacteria"/>
</dbReference>
<dbReference type="HOGENOM" id="CLU_004620_0_2_7"/>
<dbReference type="OrthoDB" id="9801272at2"/>
<dbReference type="Proteomes" id="UP000006382">
    <property type="component" value="Chromosome"/>
</dbReference>
<dbReference type="GO" id="GO:0004375">
    <property type="term" value="F:glycine dehydrogenase (decarboxylating) activity"/>
    <property type="evidence" value="ECO:0007669"/>
    <property type="project" value="UniProtKB-EC"/>
</dbReference>
<dbReference type="GO" id="GO:0019464">
    <property type="term" value="P:glycine decarboxylation via glycine cleavage system"/>
    <property type="evidence" value="ECO:0007669"/>
    <property type="project" value="UniProtKB-UniRule"/>
</dbReference>
<dbReference type="GO" id="GO:0009116">
    <property type="term" value="P:nucleoside metabolic process"/>
    <property type="evidence" value="ECO:0007669"/>
    <property type="project" value="InterPro"/>
</dbReference>
<dbReference type="CDD" id="cd00613">
    <property type="entry name" value="GDC-P"/>
    <property type="match status" value="1"/>
</dbReference>
<dbReference type="Gene3D" id="3.90.1150.10">
    <property type="entry name" value="Aspartate Aminotransferase, domain 1"/>
    <property type="match status" value="1"/>
</dbReference>
<dbReference type="Gene3D" id="3.40.640.10">
    <property type="entry name" value="Type I PLP-dependent aspartate aminotransferase-like (Major domain)"/>
    <property type="match status" value="1"/>
</dbReference>
<dbReference type="HAMAP" id="MF_00712">
    <property type="entry name" value="GcvPA"/>
    <property type="match status" value="1"/>
</dbReference>
<dbReference type="InterPro" id="IPR023010">
    <property type="entry name" value="GcvPA"/>
</dbReference>
<dbReference type="InterPro" id="IPR049315">
    <property type="entry name" value="GDC-P_N"/>
</dbReference>
<dbReference type="InterPro" id="IPR020581">
    <property type="entry name" value="GDC_P"/>
</dbReference>
<dbReference type="InterPro" id="IPR015424">
    <property type="entry name" value="PyrdxlP-dep_Trfase"/>
</dbReference>
<dbReference type="InterPro" id="IPR015421">
    <property type="entry name" value="PyrdxlP-dep_Trfase_major"/>
</dbReference>
<dbReference type="InterPro" id="IPR015422">
    <property type="entry name" value="PyrdxlP-dep_Trfase_small"/>
</dbReference>
<dbReference type="NCBIfam" id="NF001696">
    <property type="entry name" value="PRK00451.1"/>
    <property type="match status" value="1"/>
</dbReference>
<dbReference type="PANTHER" id="PTHR42806">
    <property type="entry name" value="GLYCINE CLEAVAGE SYSTEM P-PROTEIN"/>
    <property type="match status" value="1"/>
</dbReference>
<dbReference type="PANTHER" id="PTHR42806:SF1">
    <property type="entry name" value="GLYCINE DEHYDROGENASE (DECARBOXYLATING)"/>
    <property type="match status" value="1"/>
</dbReference>
<dbReference type="Pfam" id="PF02347">
    <property type="entry name" value="GDC-P"/>
    <property type="match status" value="1"/>
</dbReference>
<dbReference type="PIRSF" id="PIRSF006815">
    <property type="entry name" value="GcvPA"/>
    <property type="match status" value="1"/>
</dbReference>
<dbReference type="SUPFAM" id="SSF53383">
    <property type="entry name" value="PLP-dependent transferases"/>
    <property type="match status" value="1"/>
</dbReference>
<comment type="function">
    <text evidence="1">The glycine cleavage system catalyzes the degradation of glycine. The P protein binds the alpha-amino group of glycine through its pyridoxal phosphate cofactor; CO(2) is released and the remaining methylamine moiety is then transferred to the lipoamide cofactor of the H protein.</text>
</comment>
<comment type="catalytic activity">
    <reaction evidence="1">
        <text>N(6)-[(R)-lipoyl]-L-lysyl-[glycine-cleavage complex H protein] + glycine + H(+) = N(6)-[(R)-S(8)-aminomethyldihydrolipoyl]-L-lysyl-[glycine-cleavage complex H protein] + CO2</text>
        <dbReference type="Rhea" id="RHEA:24304"/>
        <dbReference type="Rhea" id="RHEA-COMP:10494"/>
        <dbReference type="Rhea" id="RHEA-COMP:10495"/>
        <dbReference type="ChEBI" id="CHEBI:15378"/>
        <dbReference type="ChEBI" id="CHEBI:16526"/>
        <dbReference type="ChEBI" id="CHEBI:57305"/>
        <dbReference type="ChEBI" id="CHEBI:83099"/>
        <dbReference type="ChEBI" id="CHEBI:83143"/>
        <dbReference type="EC" id="1.4.4.2"/>
    </reaction>
</comment>
<comment type="subunit">
    <text evidence="1">The glycine cleavage system is composed of four proteins: P, T, L and H. In this organism, the P 'protein' is a heterodimer of two subunits.</text>
</comment>
<comment type="similarity">
    <text evidence="1">Belongs to the GcvP family. N-terminal subunit subfamily.</text>
</comment>
<reference key="1">
    <citation type="journal article" date="2015" name="Genome Announc.">
        <title>Complete genome sequence of Anaeromyxobacter sp. Fw109-5, an anaerobic, metal-reducing bacterium isolated from a contaminated subsurface environment.</title>
        <authorList>
            <person name="Hwang C."/>
            <person name="Copeland A."/>
            <person name="Lucas S."/>
            <person name="Lapidus A."/>
            <person name="Barry K."/>
            <person name="Glavina Del Rio T."/>
            <person name="Dalin E."/>
            <person name="Tice H."/>
            <person name="Pitluck S."/>
            <person name="Sims D."/>
            <person name="Brettin T."/>
            <person name="Bruce D.C."/>
            <person name="Detter J.C."/>
            <person name="Han C.S."/>
            <person name="Schmutz J."/>
            <person name="Larimer F.W."/>
            <person name="Land M.L."/>
            <person name="Hauser L.J."/>
            <person name="Kyrpides N."/>
            <person name="Lykidis A."/>
            <person name="Richardson P."/>
            <person name="Belieav A."/>
            <person name="Sanford R.A."/>
            <person name="Loeffler F.E."/>
            <person name="Fields M.W."/>
        </authorList>
    </citation>
    <scope>NUCLEOTIDE SEQUENCE [LARGE SCALE GENOMIC DNA]</scope>
    <source>
        <strain>Fw109-5</strain>
    </source>
</reference>
<proteinExistence type="inferred from homology"/>
<evidence type="ECO:0000255" key="1">
    <source>
        <dbReference type="HAMAP-Rule" id="MF_00712"/>
    </source>
</evidence>
<organism>
    <name type="scientific">Anaeromyxobacter sp. (strain Fw109-5)</name>
    <dbReference type="NCBI Taxonomy" id="404589"/>
    <lineage>
        <taxon>Bacteria</taxon>
        <taxon>Pseudomonadati</taxon>
        <taxon>Myxococcota</taxon>
        <taxon>Myxococcia</taxon>
        <taxon>Myxococcales</taxon>
        <taxon>Cystobacterineae</taxon>
        <taxon>Anaeromyxobacteraceae</taxon>
        <taxon>Anaeromyxobacter</taxon>
    </lineage>
</organism>
<keyword id="KW-0560">Oxidoreductase</keyword>
<keyword id="KW-1185">Reference proteome</keyword>